<protein>
    <recommendedName>
        <fullName evidence="1">ATP-dependent Clp protease proteolytic subunit</fullName>
        <ecNumber evidence="1">3.4.21.92</ecNumber>
    </recommendedName>
    <alternativeName>
        <fullName evidence="1">Endopeptidase Clp</fullName>
    </alternativeName>
</protein>
<sequence>MTVKEKKIIDQYVPIVVESTGRYERAYDIFSRLLKDRIVFLGSPIDDYVANLVIAQLLFLEAEDPDKDVYLYINSPGGSVTAGLAIYDTMQYIKCDVSTICVGQAASMAAVLLAAGAKGKRYALPNARIMIHQPLGGAEGPAKDVEIITRELLRIKDLLNRILSKHTGQPIEKIEKDTDRDFFMSAEEAKEYGIVDKVVSTRE</sequence>
<comment type="function">
    <text evidence="1">Cleaves peptides in various proteins in a process that requires ATP hydrolysis. Has a chymotrypsin-like activity. Plays a major role in the degradation of misfolded proteins.</text>
</comment>
<comment type="catalytic activity">
    <reaction evidence="1">
        <text>Hydrolysis of proteins to small peptides in the presence of ATP and magnesium. alpha-casein is the usual test substrate. In the absence of ATP, only oligopeptides shorter than five residues are hydrolyzed (such as succinyl-Leu-Tyr-|-NHMec, and Leu-Tyr-Leu-|-Tyr-Trp, in which cleavage of the -Tyr-|-Leu- and -Tyr-|-Trp bonds also occurs).</text>
        <dbReference type="EC" id="3.4.21.92"/>
    </reaction>
</comment>
<comment type="subunit">
    <text evidence="1">Fourteen ClpP subunits assemble into 2 heptameric rings which stack back to back to give a disk-like structure with a central cavity, resembling the structure of eukaryotic proteasomes.</text>
</comment>
<comment type="subcellular location">
    <subcellularLocation>
        <location evidence="1">Cytoplasm</location>
    </subcellularLocation>
</comment>
<comment type="similarity">
    <text evidence="1">Belongs to the peptidase S14 family.</text>
</comment>
<name>CLPP_THESQ</name>
<proteinExistence type="inferred from homology"/>
<feature type="chain" id="PRO_1000124720" description="ATP-dependent Clp protease proteolytic subunit">
    <location>
        <begin position="1"/>
        <end position="203"/>
    </location>
</feature>
<feature type="active site" description="Nucleophile" evidence="1">
    <location>
        <position position="107"/>
    </location>
</feature>
<feature type="active site" evidence="1">
    <location>
        <position position="132"/>
    </location>
</feature>
<accession>B1L812</accession>
<keyword id="KW-0963">Cytoplasm</keyword>
<keyword id="KW-0378">Hydrolase</keyword>
<keyword id="KW-0645">Protease</keyword>
<keyword id="KW-0720">Serine protease</keyword>
<organism>
    <name type="scientific">Thermotoga sp. (strain RQ2)</name>
    <dbReference type="NCBI Taxonomy" id="126740"/>
    <lineage>
        <taxon>Bacteria</taxon>
        <taxon>Thermotogati</taxon>
        <taxon>Thermotogota</taxon>
        <taxon>Thermotogae</taxon>
        <taxon>Thermotogales</taxon>
        <taxon>Thermotogaceae</taxon>
        <taxon>Thermotoga</taxon>
    </lineage>
</organism>
<gene>
    <name evidence="1" type="primary">clpP</name>
    <name type="ordered locus">TRQ2_0233</name>
</gene>
<evidence type="ECO:0000255" key="1">
    <source>
        <dbReference type="HAMAP-Rule" id="MF_00444"/>
    </source>
</evidence>
<dbReference type="EC" id="3.4.21.92" evidence="1"/>
<dbReference type="EMBL" id="CP000969">
    <property type="protein sequence ID" value="ACB08593.1"/>
    <property type="molecule type" value="Genomic_DNA"/>
</dbReference>
<dbReference type="RefSeq" id="WP_004081059.1">
    <property type="nucleotide sequence ID" value="NC_010483.1"/>
</dbReference>
<dbReference type="SMR" id="B1L812"/>
<dbReference type="MEROPS" id="S14.001"/>
<dbReference type="KEGG" id="trq:TRQ2_0233"/>
<dbReference type="HOGENOM" id="CLU_058707_3_2_0"/>
<dbReference type="Proteomes" id="UP000001687">
    <property type="component" value="Chromosome"/>
</dbReference>
<dbReference type="GO" id="GO:0005737">
    <property type="term" value="C:cytoplasm"/>
    <property type="evidence" value="ECO:0007669"/>
    <property type="project" value="UniProtKB-SubCell"/>
</dbReference>
<dbReference type="GO" id="GO:0009368">
    <property type="term" value="C:endopeptidase Clp complex"/>
    <property type="evidence" value="ECO:0007669"/>
    <property type="project" value="TreeGrafter"/>
</dbReference>
<dbReference type="GO" id="GO:0004176">
    <property type="term" value="F:ATP-dependent peptidase activity"/>
    <property type="evidence" value="ECO:0007669"/>
    <property type="project" value="InterPro"/>
</dbReference>
<dbReference type="GO" id="GO:0051117">
    <property type="term" value="F:ATPase binding"/>
    <property type="evidence" value="ECO:0007669"/>
    <property type="project" value="TreeGrafter"/>
</dbReference>
<dbReference type="GO" id="GO:0004252">
    <property type="term" value="F:serine-type endopeptidase activity"/>
    <property type="evidence" value="ECO:0007669"/>
    <property type="project" value="UniProtKB-UniRule"/>
</dbReference>
<dbReference type="GO" id="GO:0006515">
    <property type="term" value="P:protein quality control for misfolded or incompletely synthesized proteins"/>
    <property type="evidence" value="ECO:0007669"/>
    <property type="project" value="TreeGrafter"/>
</dbReference>
<dbReference type="CDD" id="cd07017">
    <property type="entry name" value="S14_ClpP_2"/>
    <property type="match status" value="1"/>
</dbReference>
<dbReference type="FunFam" id="3.90.226.10:FF:000001">
    <property type="entry name" value="ATP-dependent Clp protease proteolytic subunit"/>
    <property type="match status" value="1"/>
</dbReference>
<dbReference type="Gene3D" id="3.90.226.10">
    <property type="entry name" value="2-enoyl-CoA Hydratase, Chain A, domain 1"/>
    <property type="match status" value="1"/>
</dbReference>
<dbReference type="HAMAP" id="MF_00444">
    <property type="entry name" value="ClpP"/>
    <property type="match status" value="1"/>
</dbReference>
<dbReference type="InterPro" id="IPR001907">
    <property type="entry name" value="ClpP"/>
</dbReference>
<dbReference type="InterPro" id="IPR029045">
    <property type="entry name" value="ClpP/crotonase-like_dom_sf"/>
</dbReference>
<dbReference type="InterPro" id="IPR023562">
    <property type="entry name" value="ClpP/TepA"/>
</dbReference>
<dbReference type="InterPro" id="IPR033135">
    <property type="entry name" value="ClpP_His_AS"/>
</dbReference>
<dbReference type="InterPro" id="IPR018215">
    <property type="entry name" value="ClpP_Ser_AS"/>
</dbReference>
<dbReference type="NCBIfam" id="TIGR00493">
    <property type="entry name" value="clpP"/>
    <property type="match status" value="1"/>
</dbReference>
<dbReference type="NCBIfam" id="NF001368">
    <property type="entry name" value="PRK00277.1"/>
    <property type="match status" value="1"/>
</dbReference>
<dbReference type="NCBIfam" id="NF009205">
    <property type="entry name" value="PRK12553.1"/>
    <property type="match status" value="1"/>
</dbReference>
<dbReference type="PANTHER" id="PTHR10381">
    <property type="entry name" value="ATP-DEPENDENT CLP PROTEASE PROTEOLYTIC SUBUNIT"/>
    <property type="match status" value="1"/>
</dbReference>
<dbReference type="PANTHER" id="PTHR10381:SF70">
    <property type="entry name" value="ATP-DEPENDENT CLP PROTEASE PROTEOLYTIC SUBUNIT"/>
    <property type="match status" value="1"/>
</dbReference>
<dbReference type="Pfam" id="PF00574">
    <property type="entry name" value="CLP_protease"/>
    <property type="match status" value="1"/>
</dbReference>
<dbReference type="PRINTS" id="PR00127">
    <property type="entry name" value="CLPPROTEASEP"/>
</dbReference>
<dbReference type="SUPFAM" id="SSF52096">
    <property type="entry name" value="ClpP/crotonase"/>
    <property type="match status" value="1"/>
</dbReference>
<dbReference type="PROSITE" id="PS00382">
    <property type="entry name" value="CLP_PROTEASE_HIS"/>
    <property type="match status" value="1"/>
</dbReference>
<dbReference type="PROSITE" id="PS00381">
    <property type="entry name" value="CLP_PROTEASE_SER"/>
    <property type="match status" value="1"/>
</dbReference>
<reference key="1">
    <citation type="journal article" date="2011" name="J. Bacteriol.">
        <title>Genome sequence of Thermotoga sp. strain RQ2, a hyperthermophilic bacterium isolated from a geothermally heated region of the seafloor near Ribeira Quente, the Azores.</title>
        <authorList>
            <person name="Swithers K.S."/>
            <person name="DiPippo J.L."/>
            <person name="Bruce D.C."/>
            <person name="Detter C."/>
            <person name="Tapia R."/>
            <person name="Han S."/>
            <person name="Saunders E."/>
            <person name="Goodwin L.A."/>
            <person name="Han J."/>
            <person name="Woyke T."/>
            <person name="Pitluck S."/>
            <person name="Pennacchio L."/>
            <person name="Nolan M."/>
            <person name="Mikhailova N."/>
            <person name="Lykidis A."/>
            <person name="Land M.L."/>
            <person name="Brettin T."/>
            <person name="Stetter K.O."/>
            <person name="Nelson K.E."/>
            <person name="Gogarten J.P."/>
            <person name="Noll K.M."/>
        </authorList>
    </citation>
    <scope>NUCLEOTIDE SEQUENCE [LARGE SCALE GENOMIC DNA]</scope>
    <source>
        <strain>RQ2</strain>
    </source>
</reference>